<protein>
    <recommendedName>
        <fullName>Oxidation resistance protein 1</fullName>
    </recommendedName>
</protein>
<evidence type="ECO:0000250" key="1"/>
<evidence type="ECO:0000255" key="2">
    <source>
        <dbReference type="PROSITE-ProRule" id="PRU01234"/>
    </source>
</evidence>
<evidence type="ECO:0000256" key="3">
    <source>
        <dbReference type="SAM" id="MobiDB-lite"/>
    </source>
</evidence>
<evidence type="ECO:0000305" key="4"/>
<gene>
    <name type="primary">OXR1</name>
    <name type="ordered locus">YALI0E29865g</name>
</gene>
<sequence>MDSSDRPSLRQRLSNWGRTDTKPAATDLTAPPNDPSENMELPPLPPVELLGYSHSTRTKIMTTELADEIRNLVPERIKLYRSWQLQYSLEQHGTSLTTLYHRNIPPHGDTARNGFVLAVKNSRGQVFGAYTDQHYHVGGKKFYGNGDCFLWKVKNADSFQAFPYTGENNFVVYCNPHFLSLGGGDGKYGLWLDDALKTGVTYPCATFGNEPLGDEKFDVVAVEVWRVGE</sequence>
<accession>Q6C443</accession>
<dbReference type="EMBL" id="CR382131">
    <property type="protein sequence ID" value="CAG80173.1"/>
    <property type="molecule type" value="Genomic_DNA"/>
</dbReference>
<dbReference type="RefSeq" id="XP_504569.1">
    <property type="nucleotide sequence ID" value="XM_504569.1"/>
</dbReference>
<dbReference type="SMR" id="Q6C443"/>
<dbReference type="FunCoup" id="Q6C443">
    <property type="interactions" value="12"/>
</dbReference>
<dbReference type="STRING" id="284591.Q6C443"/>
<dbReference type="EnsemblFungi" id="CAG80173">
    <property type="protein sequence ID" value="CAG80173"/>
    <property type="gene ID" value="YALI0_E29865g"/>
</dbReference>
<dbReference type="KEGG" id="yli:2911446"/>
<dbReference type="VEuPathDB" id="FungiDB:YALI0_E29865g"/>
<dbReference type="HOGENOM" id="CLU_029204_0_0_1"/>
<dbReference type="InParanoid" id="Q6C443"/>
<dbReference type="OMA" id="HYGLWCD"/>
<dbReference type="OrthoDB" id="116252at4891"/>
<dbReference type="Proteomes" id="UP000001300">
    <property type="component" value="Chromosome E"/>
</dbReference>
<dbReference type="GO" id="GO:0005739">
    <property type="term" value="C:mitochondrion"/>
    <property type="evidence" value="ECO:0007669"/>
    <property type="project" value="UniProtKB-SubCell"/>
</dbReference>
<dbReference type="GO" id="GO:0005634">
    <property type="term" value="C:nucleus"/>
    <property type="evidence" value="ECO:0000318"/>
    <property type="project" value="GO_Central"/>
</dbReference>
<dbReference type="GO" id="GO:0045053">
    <property type="term" value="P:protein retention in Golgi apparatus"/>
    <property type="evidence" value="ECO:0007669"/>
    <property type="project" value="EnsemblFungi"/>
</dbReference>
<dbReference type="GO" id="GO:0032984">
    <property type="term" value="P:protein-containing complex disassembly"/>
    <property type="evidence" value="ECO:0007669"/>
    <property type="project" value="EnsemblFungi"/>
</dbReference>
<dbReference type="GO" id="GO:0006979">
    <property type="term" value="P:response to oxidative stress"/>
    <property type="evidence" value="ECO:0000318"/>
    <property type="project" value="GO_Central"/>
</dbReference>
<dbReference type="InterPro" id="IPR006571">
    <property type="entry name" value="TLDc_dom"/>
</dbReference>
<dbReference type="PANTHER" id="PTHR23354:SF62">
    <property type="entry name" value="MUSTARD, ISOFORM V"/>
    <property type="match status" value="1"/>
</dbReference>
<dbReference type="PANTHER" id="PTHR23354">
    <property type="entry name" value="NUCLEOLAR PROTEIN 7/ESTROGEN RECEPTOR COACTIVATOR-RELATED"/>
    <property type="match status" value="1"/>
</dbReference>
<dbReference type="Pfam" id="PF07534">
    <property type="entry name" value="TLD"/>
    <property type="match status" value="1"/>
</dbReference>
<dbReference type="SMART" id="SM00584">
    <property type="entry name" value="TLDc"/>
    <property type="match status" value="1"/>
</dbReference>
<dbReference type="PROSITE" id="PS51886">
    <property type="entry name" value="TLDC"/>
    <property type="match status" value="1"/>
</dbReference>
<comment type="function">
    <text evidence="1">May be involved in protection from oxidative damage.</text>
</comment>
<comment type="subcellular location">
    <subcellularLocation>
        <location evidence="1">Mitochondrion</location>
    </subcellularLocation>
</comment>
<comment type="similarity">
    <text evidence="4">Belongs to the OXR1 family.</text>
</comment>
<name>OXR1_YARLI</name>
<reference key="1">
    <citation type="journal article" date="2004" name="Nature">
        <title>Genome evolution in yeasts.</title>
        <authorList>
            <person name="Dujon B."/>
            <person name="Sherman D."/>
            <person name="Fischer G."/>
            <person name="Durrens P."/>
            <person name="Casaregola S."/>
            <person name="Lafontaine I."/>
            <person name="de Montigny J."/>
            <person name="Marck C."/>
            <person name="Neuveglise C."/>
            <person name="Talla E."/>
            <person name="Goffard N."/>
            <person name="Frangeul L."/>
            <person name="Aigle M."/>
            <person name="Anthouard V."/>
            <person name="Babour A."/>
            <person name="Barbe V."/>
            <person name="Barnay S."/>
            <person name="Blanchin S."/>
            <person name="Beckerich J.-M."/>
            <person name="Beyne E."/>
            <person name="Bleykasten C."/>
            <person name="Boisrame A."/>
            <person name="Boyer J."/>
            <person name="Cattolico L."/>
            <person name="Confanioleri F."/>
            <person name="de Daruvar A."/>
            <person name="Despons L."/>
            <person name="Fabre E."/>
            <person name="Fairhead C."/>
            <person name="Ferry-Dumazet H."/>
            <person name="Groppi A."/>
            <person name="Hantraye F."/>
            <person name="Hennequin C."/>
            <person name="Jauniaux N."/>
            <person name="Joyet P."/>
            <person name="Kachouri R."/>
            <person name="Kerrest A."/>
            <person name="Koszul R."/>
            <person name="Lemaire M."/>
            <person name="Lesur I."/>
            <person name="Ma L."/>
            <person name="Muller H."/>
            <person name="Nicaud J.-M."/>
            <person name="Nikolski M."/>
            <person name="Oztas S."/>
            <person name="Ozier-Kalogeropoulos O."/>
            <person name="Pellenz S."/>
            <person name="Potier S."/>
            <person name="Richard G.-F."/>
            <person name="Straub M.-L."/>
            <person name="Suleau A."/>
            <person name="Swennen D."/>
            <person name="Tekaia F."/>
            <person name="Wesolowski-Louvel M."/>
            <person name="Westhof E."/>
            <person name="Wirth B."/>
            <person name="Zeniou-Meyer M."/>
            <person name="Zivanovic Y."/>
            <person name="Bolotin-Fukuhara M."/>
            <person name="Thierry A."/>
            <person name="Bouchier C."/>
            <person name="Caudron B."/>
            <person name="Scarpelli C."/>
            <person name="Gaillardin C."/>
            <person name="Weissenbach J."/>
            <person name="Wincker P."/>
            <person name="Souciet J.-L."/>
        </authorList>
    </citation>
    <scope>NUCLEOTIDE SEQUENCE [LARGE SCALE GENOMIC DNA]</scope>
    <source>
        <strain>CLIB 122 / E 150</strain>
    </source>
</reference>
<keyword id="KW-0496">Mitochondrion</keyword>
<keyword id="KW-1185">Reference proteome</keyword>
<organism>
    <name type="scientific">Yarrowia lipolytica (strain CLIB 122 / E 150)</name>
    <name type="common">Yeast</name>
    <name type="synonym">Candida lipolytica</name>
    <dbReference type="NCBI Taxonomy" id="284591"/>
    <lineage>
        <taxon>Eukaryota</taxon>
        <taxon>Fungi</taxon>
        <taxon>Dikarya</taxon>
        <taxon>Ascomycota</taxon>
        <taxon>Saccharomycotina</taxon>
        <taxon>Dipodascomycetes</taxon>
        <taxon>Dipodascales</taxon>
        <taxon>Dipodascales incertae sedis</taxon>
        <taxon>Yarrowia</taxon>
    </lineage>
</organism>
<feature type="chain" id="PRO_0000058122" description="Oxidation resistance protein 1">
    <location>
        <begin position="1"/>
        <end position="229"/>
    </location>
</feature>
<feature type="domain" description="TLDc" evidence="2">
    <location>
        <begin position="59"/>
        <end position="228"/>
    </location>
</feature>
<feature type="region of interest" description="Disordered" evidence="3">
    <location>
        <begin position="1"/>
        <end position="44"/>
    </location>
</feature>
<proteinExistence type="inferred from homology"/>